<organism>
    <name type="scientific">Acidianus two-tailed virus</name>
    <name type="common">ATV</name>
    <dbReference type="NCBI Taxonomy" id="315953"/>
    <lineage>
        <taxon>Viruses</taxon>
        <taxon>Viruses incertae sedis</taxon>
        <taxon>Bicaudaviridae</taxon>
        <taxon>Bicaudavirus</taxon>
    </lineage>
</organism>
<protein>
    <recommendedName>
        <fullName>Uncharacterized protein ORF240</fullName>
    </recommendedName>
</protein>
<name>Y240_ATV</name>
<keyword id="KW-1185">Reference proteome</keyword>
<sequence length="240" mass="27764">MGEGKGENKWGAAQMSNNPIRNKDFKVFGLVEKIYEQKGEFVKLFAEIKKKLYSMSIEQLLLMPSYARSKLKDEYGHIEFEYAGYGDRIVIVKLEDPWTDDTNKRQGKTAFLVYFSYQTSKPLVPAQITYKIRSIFKTMKELNQKGYRVFPALFANSITPGALKILQNPKINIRFFSDVNDLLNWIYSKVLNRLKKIVEIAKFTLKFDKIFTFLKTIIAGLGYEVPSDILMAWASKPVRP</sequence>
<feature type="chain" id="PRO_0000389070" description="Uncharacterized protein ORF240">
    <location>
        <begin position="1"/>
        <end position="240"/>
    </location>
</feature>
<reference key="1">
    <citation type="journal article" date="2005" name="Nature">
        <title>Virology: independent virus development outside a host.</title>
        <authorList>
            <person name="Haring M."/>
            <person name="Vestergaard G."/>
            <person name="Rachel R."/>
            <person name="Chen L."/>
            <person name="Garrett R.A."/>
            <person name="Prangishvili D."/>
        </authorList>
    </citation>
    <scope>NUCLEOTIDE SEQUENCE [GENOMIC DNA]</scope>
</reference>
<dbReference type="EMBL" id="AJ888457">
    <property type="protein sequence ID" value="CAI59889.1"/>
    <property type="molecule type" value="Genomic_DNA"/>
</dbReference>
<dbReference type="RefSeq" id="YP_319852.1">
    <property type="nucleotide sequence ID" value="NC_007409.1"/>
</dbReference>
<dbReference type="SMR" id="Q3V4S5"/>
<dbReference type="GeneID" id="4484245"/>
<dbReference type="KEGG" id="vg:4484245"/>
<dbReference type="OrthoDB" id="16165at10239"/>
<dbReference type="Proteomes" id="UP000002150">
    <property type="component" value="Genome"/>
</dbReference>
<proteinExistence type="predicted"/>
<organismHost>
    <name type="scientific">Acidianus convivator</name>
    <dbReference type="NCBI Taxonomy" id="269667"/>
</organismHost>
<accession>Q3V4S5</accession>